<keyword id="KW-0030">Aminoacyl-tRNA synthetase</keyword>
<keyword id="KW-0067">ATP-binding</keyword>
<keyword id="KW-0963">Cytoplasm</keyword>
<keyword id="KW-0436">Ligase</keyword>
<keyword id="KW-0547">Nucleotide-binding</keyword>
<keyword id="KW-0648">Protein biosynthesis</keyword>
<keyword id="KW-1185">Reference proteome</keyword>
<proteinExistence type="inferred from homology"/>
<accession>B9DW81</accession>
<sequence length="425" mass="48079">MKLQKPKGTQDILPGEAAKWQYLENVARETFKKYHYGEIRTPMFEHYEVISRSVGDTTDIVTKEMYDFHDKGDRHITLRPEGTAPVVRSFVENKLFAPEVQKPVKLYYIGSMFRYERPQAGRLREFHQIGVECFGSANPASDVETIAMASHLFETLGIKDMTLHLNSLGNPSSRAAYRQALIDYLTPMREQLSKDSQRRLDENPLRVLDSKEVEDKVAVENAPSILDYLDEESKAHFEAVQEMLTTLNIPFVIDTNMVRGLDYYNHTIFEFMAKVEGSDLTICAGGRYDGLVSYFDGPETPGFGFGLGLERLLLILEKQGITLPIEEPMDVYLAVLGEAANSKALALVQAIRKQGFTAERDYLGRKIKAQFKSADSFNAKTIITLGESEVETGKVIIKNNQTREEMEVSLEEITSNFATIMEKLV</sequence>
<evidence type="ECO:0000255" key="1">
    <source>
        <dbReference type="HAMAP-Rule" id="MF_00127"/>
    </source>
</evidence>
<protein>
    <recommendedName>
        <fullName evidence="1">Histidine--tRNA ligase</fullName>
        <ecNumber evidence="1">6.1.1.21</ecNumber>
    </recommendedName>
    <alternativeName>
        <fullName evidence="1">Histidyl-tRNA synthetase</fullName>
        <shortName evidence="1">HisRS</shortName>
    </alternativeName>
</protein>
<reference key="1">
    <citation type="journal article" date="2009" name="BMC Genomics">
        <title>Evidence for niche adaptation in the genome of the bovine pathogen Streptococcus uberis.</title>
        <authorList>
            <person name="Ward P.N."/>
            <person name="Holden M.T.G."/>
            <person name="Leigh J.A."/>
            <person name="Lennard N."/>
            <person name="Bignell A."/>
            <person name="Barron A."/>
            <person name="Clark L."/>
            <person name="Quail M.A."/>
            <person name="Woodward J."/>
            <person name="Barrell B.G."/>
            <person name="Egan S.A."/>
            <person name="Field T.R."/>
            <person name="Maskell D."/>
            <person name="Kehoe M."/>
            <person name="Dowson C.G."/>
            <person name="Chanter N."/>
            <person name="Whatmore A.M."/>
            <person name="Bentley S.D."/>
            <person name="Parkhill J."/>
        </authorList>
    </citation>
    <scope>NUCLEOTIDE SEQUENCE [LARGE SCALE GENOMIC DNA]</scope>
    <source>
        <strain>ATCC BAA-854 / 0140J</strain>
    </source>
</reference>
<comment type="catalytic activity">
    <reaction evidence="1">
        <text>tRNA(His) + L-histidine + ATP = L-histidyl-tRNA(His) + AMP + diphosphate + H(+)</text>
        <dbReference type="Rhea" id="RHEA:17313"/>
        <dbReference type="Rhea" id="RHEA-COMP:9665"/>
        <dbReference type="Rhea" id="RHEA-COMP:9689"/>
        <dbReference type="ChEBI" id="CHEBI:15378"/>
        <dbReference type="ChEBI" id="CHEBI:30616"/>
        <dbReference type="ChEBI" id="CHEBI:33019"/>
        <dbReference type="ChEBI" id="CHEBI:57595"/>
        <dbReference type="ChEBI" id="CHEBI:78442"/>
        <dbReference type="ChEBI" id="CHEBI:78527"/>
        <dbReference type="ChEBI" id="CHEBI:456215"/>
        <dbReference type="EC" id="6.1.1.21"/>
    </reaction>
</comment>
<comment type="subunit">
    <text evidence="1">Homodimer.</text>
</comment>
<comment type="subcellular location">
    <subcellularLocation>
        <location evidence="1">Cytoplasm</location>
    </subcellularLocation>
</comment>
<comment type="similarity">
    <text evidence="1">Belongs to the class-II aminoacyl-tRNA synthetase family.</text>
</comment>
<gene>
    <name evidence="1" type="primary">hisS</name>
    <name type="ordered locus">SUB1794</name>
</gene>
<dbReference type="EC" id="6.1.1.21" evidence="1"/>
<dbReference type="EMBL" id="AM946015">
    <property type="protein sequence ID" value="CAR43804.1"/>
    <property type="molecule type" value="Genomic_DNA"/>
</dbReference>
<dbReference type="RefSeq" id="WP_015912084.1">
    <property type="nucleotide sequence ID" value="NC_012004.1"/>
</dbReference>
<dbReference type="SMR" id="B9DW81"/>
<dbReference type="STRING" id="218495.SUB1794"/>
<dbReference type="KEGG" id="sub:SUB1794"/>
<dbReference type="eggNOG" id="COG0124">
    <property type="taxonomic scope" value="Bacteria"/>
</dbReference>
<dbReference type="HOGENOM" id="CLU_025113_1_1_9"/>
<dbReference type="OrthoDB" id="9800814at2"/>
<dbReference type="Proteomes" id="UP000000449">
    <property type="component" value="Chromosome"/>
</dbReference>
<dbReference type="GO" id="GO:0005737">
    <property type="term" value="C:cytoplasm"/>
    <property type="evidence" value="ECO:0007669"/>
    <property type="project" value="UniProtKB-SubCell"/>
</dbReference>
<dbReference type="GO" id="GO:0005524">
    <property type="term" value="F:ATP binding"/>
    <property type="evidence" value="ECO:0007669"/>
    <property type="project" value="UniProtKB-UniRule"/>
</dbReference>
<dbReference type="GO" id="GO:0140096">
    <property type="term" value="F:catalytic activity, acting on a protein"/>
    <property type="evidence" value="ECO:0007669"/>
    <property type="project" value="UniProtKB-ARBA"/>
</dbReference>
<dbReference type="GO" id="GO:0004821">
    <property type="term" value="F:histidine-tRNA ligase activity"/>
    <property type="evidence" value="ECO:0007669"/>
    <property type="project" value="UniProtKB-UniRule"/>
</dbReference>
<dbReference type="GO" id="GO:0016740">
    <property type="term" value="F:transferase activity"/>
    <property type="evidence" value="ECO:0007669"/>
    <property type="project" value="UniProtKB-ARBA"/>
</dbReference>
<dbReference type="GO" id="GO:0006427">
    <property type="term" value="P:histidyl-tRNA aminoacylation"/>
    <property type="evidence" value="ECO:0007669"/>
    <property type="project" value="UniProtKB-UniRule"/>
</dbReference>
<dbReference type="CDD" id="cd00773">
    <property type="entry name" value="HisRS-like_core"/>
    <property type="match status" value="1"/>
</dbReference>
<dbReference type="CDD" id="cd00859">
    <property type="entry name" value="HisRS_anticodon"/>
    <property type="match status" value="1"/>
</dbReference>
<dbReference type="FunFam" id="3.30.930.10:FF:000005">
    <property type="entry name" value="Histidine--tRNA ligase"/>
    <property type="match status" value="1"/>
</dbReference>
<dbReference type="Gene3D" id="3.40.50.800">
    <property type="entry name" value="Anticodon-binding domain"/>
    <property type="match status" value="1"/>
</dbReference>
<dbReference type="Gene3D" id="3.30.930.10">
    <property type="entry name" value="Bira Bifunctional Protein, Domain 2"/>
    <property type="match status" value="1"/>
</dbReference>
<dbReference type="HAMAP" id="MF_00127">
    <property type="entry name" value="His_tRNA_synth"/>
    <property type="match status" value="1"/>
</dbReference>
<dbReference type="InterPro" id="IPR006195">
    <property type="entry name" value="aa-tRNA-synth_II"/>
</dbReference>
<dbReference type="InterPro" id="IPR045864">
    <property type="entry name" value="aa-tRNA-synth_II/BPL/LPL"/>
</dbReference>
<dbReference type="InterPro" id="IPR004154">
    <property type="entry name" value="Anticodon-bd"/>
</dbReference>
<dbReference type="InterPro" id="IPR036621">
    <property type="entry name" value="Anticodon-bd_dom_sf"/>
</dbReference>
<dbReference type="InterPro" id="IPR015807">
    <property type="entry name" value="His-tRNA-ligase"/>
</dbReference>
<dbReference type="InterPro" id="IPR041715">
    <property type="entry name" value="HisRS-like_core"/>
</dbReference>
<dbReference type="InterPro" id="IPR004516">
    <property type="entry name" value="HisRS/HisZ"/>
</dbReference>
<dbReference type="InterPro" id="IPR033656">
    <property type="entry name" value="HisRS_anticodon"/>
</dbReference>
<dbReference type="NCBIfam" id="TIGR00442">
    <property type="entry name" value="hisS"/>
    <property type="match status" value="1"/>
</dbReference>
<dbReference type="PANTHER" id="PTHR43707:SF1">
    <property type="entry name" value="HISTIDINE--TRNA LIGASE, MITOCHONDRIAL-RELATED"/>
    <property type="match status" value="1"/>
</dbReference>
<dbReference type="PANTHER" id="PTHR43707">
    <property type="entry name" value="HISTIDYL-TRNA SYNTHETASE"/>
    <property type="match status" value="1"/>
</dbReference>
<dbReference type="Pfam" id="PF03129">
    <property type="entry name" value="HGTP_anticodon"/>
    <property type="match status" value="1"/>
</dbReference>
<dbReference type="Pfam" id="PF13393">
    <property type="entry name" value="tRNA-synt_His"/>
    <property type="match status" value="1"/>
</dbReference>
<dbReference type="PIRSF" id="PIRSF001549">
    <property type="entry name" value="His-tRNA_synth"/>
    <property type="match status" value="1"/>
</dbReference>
<dbReference type="SUPFAM" id="SSF52954">
    <property type="entry name" value="Class II aaRS ABD-related"/>
    <property type="match status" value="1"/>
</dbReference>
<dbReference type="SUPFAM" id="SSF55681">
    <property type="entry name" value="Class II aaRS and biotin synthetases"/>
    <property type="match status" value="1"/>
</dbReference>
<dbReference type="PROSITE" id="PS50862">
    <property type="entry name" value="AA_TRNA_LIGASE_II"/>
    <property type="match status" value="1"/>
</dbReference>
<feature type="chain" id="PRO_1000199159" description="Histidine--tRNA ligase">
    <location>
        <begin position="1"/>
        <end position="425"/>
    </location>
</feature>
<name>SYH_STRU0</name>
<organism>
    <name type="scientific">Streptococcus uberis (strain ATCC BAA-854 / 0140J)</name>
    <dbReference type="NCBI Taxonomy" id="218495"/>
    <lineage>
        <taxon>Bacteria</taxon>
        <taxon>Bacillati</taxon>
        <taxon>Bacillota</taxon>
        <taxon>Bacilli</taxon>
        <taxon>Lactobacillales</taxon>
        <taxon>Streptococcaceae</taxon>
        <taxon>Streptococcus</taxon>
    </lineage>
</organism>